<name>SCPA_LEPIN</name>
<comment type="function">
    <text evidence="1">Participates in chromosomal partition during cell division. May act via the formation of a condensin-like complex containing Smc and ScpB that pull DNA away from mid-cell into both cell halves.</text>
</comment>
<comment type="subunit">
    <text evidence="1">Component of a cohesin-like complex composed of ScpA, ScpB and the Smc homodimer, in which ScpA and ScpB bind to the head domain of Smc. The presence of the three proteins is required for the association of the complex with DNA.</text>
</comment>
<comment type="subcellular location">
    <subcellularLocation>
        <location evidence="1">Cytoplasm</location>
    </subcellularLocation>
    <text evidence="1">Associated with two foci at the outer edges of the nucleoid region in young cells, and at four foci within both cell halves in older cells.</text>
</comment>
<comment type="similarity">
    <text evidence="1">Belongs to the ScpA family.</text>
</comment>
<accession>Q7ZAN1</accession>
<protein>
    <recommendedName>
        <fullName evidence="1">Segregation and condensation protein A</fullName>
    </recommendedName>
</protein>
<reference key="1">
    <citation type="journal article" date="2003" name="Nature">
        <title>Unique physiological and pathogenic features of Leptospira interrogans revealed by whole-genome sequencing.</title>
        <authorList>
            <person name="Ren S.-X."/>
            <person name="Fu G."/>
            <person name="Jiang X.-G."/>
            <person name="Zeng R."/>
            <person name="Miao Y.-G."/>
            <person name="Xu H."/>
            <person name="Zhang Y.-X."/>
            <person name="Xiong H."/>
            <person name="Lu G."/>
            <person name="Lu L.-F."/>
            <person name="Jiang H.-Q."/>
            <person name="Jia J."/>
            <person name="Tu Y.-F."/>
            <person name="Jiang J.-X."/>
            <person name="Gu W.-Y."/>
            <person name="Zhang Y.-Q."/>
            <person name="Cai Z."/>
            <person name="Sheng H.-H."/>
            <person name="Yin H.-F."/>
            <person name="Zhang Y."/>
            <person name="Zhu G.-F."/>
            <person name="Wan M."/>
            <person name="Huang H.-L."/>
            <person name="Qian Z."/>
            <person name="Wang S.-Y."/>
            <person name="Ma W."/>
            <person name="Yao Z.-J."/>
            <person name="Shen Y."/>
            <person name="Qiang B.-Q."/>
            <person name="Xia Q.-C."/>
            <person name="Guo X.-K."/>
            <person name="Danchin A."/>
            <person name="Saint Girons I."/>
            <person name="Somerville R.L."/>
            <person name="Wen Y.-M."/>
            <person name="Shi M.-H."/>
            <person name="Chen Z."/>
            <person name="Xu J.-G."/>
            <person name="Zhao G.-P."/>
        </authorList>
    </citation>
    <scope>NUCLEOTIDE SEQUENCE [LARGE SCALE GENOMIC DNA]</scope>
    <source>
        <strain>56601</strain>
    </source>
</reference>
<feature type="chain" id="PRO_0000211089" description="Segregation and condensation protein A">
    <location>
        <begin position="1"/>
        <end position="261"/>
    </location>
</feature>
<organism>
    <name type="scientific">Leptospira interrogans serogroup Icterohaemorrhagiae serovar Lai (strain 56601)</name>
    <dbReference type="NCBI Taxonomy" id="189518"/>
    <lineage>
        <taxon>Bacteria</taxon>
        <taxon>Pseudomonadati</taxon>
        <taxon>Spirochaetota</taxon>
        <taxon>Spirochaetia</taxon>
        <taxon>Leptospirales</taxon>
        <taxon>Leptospiraceae</taxon>
        <taxon>Leptospira</taxon>
    </lineage>
</organism>
<gene>
    <name evidence="1" type="primary">scpA</name>
    <name type="ordered locus">LA_1254</name>
</gene>
<dbReference type="EMBL" id="AE010300">
    <property type="protein sequence ID" value="AAN48453.1"/>
    <property type="molecule type" value="Genomic_DNA"/>
</dbReference>
<dbReference type="RefSeq" id="NP_711435.1">
    <property type="nucleotide sequence ID" value="NC_004342.2"/>
</dbReference>
<dbReference type="RefSeq" id="WP_000426654.1">
    <property type="nucleotide sequence ID" value="NC_004342.2"/>
</dbReference>
<dbReference type="SMR" id="Q7ZAN1"/>
<dbReference type="STRING" id="189518.LA_1254"/>
<dbReference type="PaxDb" id="189518-LA_1254"/>
<dbReference type="EnsemblBacteria" id="AAN48453">
    <property type="protein sequence ID" value="AAN48453"/>
    <property type="gene ID" value="LA_1254"/>
</dbReference>
<dbReference type="KEGG" id="lil:LA_1254"/>
<dbReference type="PATRIC" id="fig|189518.3.peg.1255"/>
<dbReference type="HOGENOM" id="CLU_038686_3_0_12"/>
<dbReference type="InParanoid" id="Q7ZAN1"/>
<dbReference type="OrthoDB" id="9811016at2"/>
<dbReference type="Proteomes" id="UP000001408">
    <property type="component" value="Chromosome I"/>
</dbReference>
<dbReference type="GO" id="GO:0005737">
    <property type="term" value="C:cytoplasm"/>
    <property type="evidence" value="ECO:0007669"/>
    <property type="project" value="UniProtKB-SubCell"/>
</dbReference>
<dbReference type="GO" id="GO:0051301">
    <property type="term" value="P:cell division"/>
    <property type="evidence" value="ECO:0007669"/>
    <property type="project" value="UniProtKB-KW"/>
</dbReference>
<dbReference type="GO" id="GO:0007059">
    <property type="term" value="P:chromosome segregation"/>
    <property type="evidence" value="ECO:0007669"/>
    <property type="project" value="UniProtKB-UniRule"/>
</dbReference>
<dbReference type="GO" id="GO:0006260">
    <property type="term" value="P:DNA replication"/>
    <property type="evidence" value="ECO:0007669"/>
    <property type="project" value="UniProtKB-UniRule"/>
</dbReference>
<dbReference type="Gene3D" id="6.10.250.2410">
    <property type="match status" value="1"/>
</dbReference>
<dbReference type="Gene3D" id="1.10.10.580">
    <property type="entry name" value="Structural maintenance of chromosome 1. Chain E"/>
    <property type="match status" value="1"/>
</dbReference>
<dbReference type="HAMAP" id="MF_01805">
    <property type="entry name" value="ScpA"/>
    <property type="match status" value="1"/>
</dbReference>
<dbReference type="InterPro" id="IPR003768">
    <property type="entry name" value="ScpA"/>
</dbReference>
<dbReference type="InterPro" id="IPR023093">
    <property type="entry name" value="ScpA-like_C"/>
</dbReference>
<dbReference type="PANTHER" id="PTHR33969">
    <property type="entry name" value="SEGREGATION AND CONDENSATION PROTEIN A"/>
    <property type="match status" value="1"/>
</dbReference>
<dbReference type="PANTHER" id="PTHR33969:SF2">
    <property type="entry name" value="SEGREGATION AND CONDENSATION PROTEIN A"/>
    <property type="match status" value="1"/>
</dbReference>
<dbReference type="Pfam" id="PF02616">
    <property type="entry name" value="SMC_ScpA"/>
    <property type="match status" value="1"/>
</dbReference>
<evidence type="ECO:0000255" key="1">
    <source>
        <dbReference type="HAMAP-Rule" id="MF_01805"/>
    </source>
</evidence>
<keyword id="KW-0131">Cell cycle</keyword>
<keyword id="KW-0132">Cell division</keyword>
<keyword id="KW-0159">Chromosome partition</keyword>
<keyword id="KW-0963">Cytoplasm</keyword>
<keyword id="KW-1185">Reference proteome</keyword>
<sequence>MENEESGKSFVVQWNNSEGGLSEGPLSVLWSLIESYKVDIFDVSLSRITRDFLSFLRISETLSLELSAEYALMAANLIYLKSKALLPDPGFEEEDYEPPLPPELVEKLLEHKKFQLTAKKLSEMDQTQTGVFRRESNVTLDEEDNWLDVSLLDLISAFHEILESQSVEAEIPTLLTAPHRFTVEEKMEKILFTLREKKEISFPELFEREKPEKAEIVATFLALLELSKQRILRAKQHKLFGEIRLFLVEGHWNGTEQQSKD</sequence>
<proteinExistence type="inferred from homology"/>